<protein>
    <recommendedName>
        <fullName>Putative epoxide hydrolase</fullName>
        <ecNumber>3.3.2.10</ecNumber>
    </recommendedName>
    <alternativeName>
        <fullName>Epoxide hydratase</fullName>
    </alternativeName>
</protein>
<gene>
    <name type="ordered locus">STAUR_4299</name>
    <name type="ORF">STIAU_6512</name>
</gene>
<keyword id="KW-0058">Aromatic hydrocarbons catabolism</keyword>
<keyword id="KW-0378">Hydrolase</keyword>
<keyword id="KW-0732">Signal</keyword>
<reference key="1">
    <citation type="journal article" date="1993" name="J. Bacteriol.">
        <title>Heat shock and development induce synthesis of a low-molecular-weight stress-responsive protein in the myxobacterium Stigmatella aurantiaca.</title>
        <authorList>
            <person name="Heidelbach M."/>
            <person name="Skladny H."/>
            <person name="Schairer H.U."/>
        </authorList>
    </citation>
    <scope>NUCLEOTIDE SEQUENCE [GENOMIC DNA]</scope>
    <source>
        <strain>DW4/3-1</strain>
    </source>
</reference>
<reference key="2">
    <citation type="submission" date="2006-04" db="EMBL/GenBank/DDBJ databases">
        <authorList>
            <person name="Nierman W.C."/>
        </authorList>
    </citation>
    <scope>NUCLEOTIDE SEQUENCE [LARGE SCALE GENOMIC DNA]</scope>
    <source>
        <strain>DW4/3-1</strain>
    </source>
</reference>
<reference key="3">
    <citation type="journal article" date="2011" name="Mol. Biol. Evol.">
        <title>Comparative genomic analysis of fruiting body formation in Myxococcales.</title>
        <authorList>
            <person name="Huntley S."/>
            <person name="Hamann N."/>
            <person name="Wegener-Feldbruegge S."/>
            <person name="Treuner-Lange A."/>
            <person name="Kube M."/>
            <person name="Reinhardt R."/>
            <person name="Klages S."/>
            <person name="Mueller R."/>
            <person name="Ronning C.M."/>
            <person name="Nierman W.C."/>
            <person name="Sogaard-Andersen L."/>
        </authorList>
    </citation>
    <scope>NUCLEOTIDE SEQUENCE [LARGE SCALE GENOMIC DNA]</scope>
    <source>
        <strain>DW4/3-1</strain>
    </source>
</reference>
<accession>Q06816</accession>
<accession>Q08V44</accession>
<dbReference type="EC" id="3.3.2.10"/>
<dbReference type="EMBL" id="M94510">
    <property type="protein sequence ID" value="AAA16137.1"/>
    <property type="status" value="ALT_SEQ"/>
    <property type="molecule type" value="Unassigned_DNA"/>
</dbReference>
<dbReference type="EMBL" id="AAMD01000121">
    <property type="protein sequence ID" value="EAU64350.1"/>
    <property type="molecule type" value="Genomic_DNA"/>
</dbReference>
<dbReference type="EMBL" id="CP002271">
    <property type="protein sequence ID" value="ADO72079.1"/>
    <property type="molecule type" value="Genomic_DNA"/>
</dbReference>
<dbReference type="PIR" id="S27670">
    <property type="entry name" value="S27670"/>
</dbReference>
<dbReference type="RefSeq" id="WP_002616688.1">
    <property type="nucleotide sequence ID" value="NC_014623.1"/>
</dbReference>
<dbReference type="SMR" id="Q06816"/>
<dbReference type="STRING" id="378806.STAUR_4299"/>
<dbReference type="ESTHER" id="stiau-EPHA">
    <property type="family name" value="Epoxide_hydrolase"/>
</dbReference>
<dbReference type="MEROPS" id="S33.971"/>
<dbReference type="KEGG" id="sur:STAUR_4299"/>
<dbReference type="PATRIC" id="fig|378806.16.peg.3264"/>
<dbReference type="eggNOG" id="COG0596">
    <property type="taxonomic scope" value="Bacteria"/>
</dbReference>
<dbReference type="HOGENOM" id="CLU_019414_0_1_7"/>
<dbReference type="OrthoDB" id="9780765at2"/>
<dbReference type="Proteomes" id="UP000001351">
    <property type="component" value="Chromosome"/>
</dbReference>
<dbReference type="Proteomes" id="UP000032702">
    <property type="component" value="Unassembled WGS sequence"/>
</dbReference>
<dbReference type="GO" id="GO:0004301">
    <property type="term" value="F:epoxide hydrolase activity"/>
    <property type="evidence" value="ECO:0007669"/>
    <property type="project" value="UniProtKB-EC"/>
</dbReference>
<dbReference type="GO" id="GO:0009056">
    <property type="term" value="P:catabolic process"/>
    <property type="evidence" value="ECO:0007669"/>
    <property type="project" value="UniProtKB-KW"/>
</dbReference>
<dbReference type="GO" id="GO:0097176">
    <property type="term" value="P:epoxide metabolic process"/>
    <property type="evidence" value="ECO:0007669"/>
    <property type="project" value="TreeGrafter"/>
</dbReference>
<dbReference type="Gene3D" id="3.40.50.1820">
    <property type="entry name" value="alpha/beta hydrolase"/>
    <property type="match status" value="1"/>
</dbReference>
<dbReference type="InterPro" id="IPR029058">
    <property type="entry name" value="AB_hydrolase_fold"/>
</dbReference>
<dbReference type="InterPro" id="IPR000639">
    <property type="entry name" value="Epox_hydrolase-like"/>
</dbReference>
<dbReference type="InterPro" id="IPR010497">
    <property type="entry name" value="Epoxide_hydro_N"/>
</dbReference>
<dbReference type="InterPro" id="IPR016292">
    <property type="entry name" value="Epoxide_hydrolase"/>
</dbReference>
<dbReference type="InterPro" id="IPR006311">
    <property type="entry name" value="TAT_signal"/>
</dbReference>
<dbReference type="PANTHER" id="PTHR21661:SF35">
    <property type="entry name" value="EPOXIDE HYDROLASE"/>
    <property type="match status" value="1"/>
</dbReference>
<dbReference type="PANTHER" id="PTHR21661">
    <property type="entry name" value="EPOXIDE HYDROLASE 1-RELATED"/>
    <property type="match status" value="1"/>
</dbReference>
<dbReference type="Pfam" id="PF06441">
    <property type="entry name" value="EHN"/>
    <property type="match status" value="1"/>
</dbReference>
<dbReference type="PIRSF" id="PIRSF001112">
    <property type="entry name" value="Epoxide_hydrolase"/>
    <property type="match status" value="1"/>
</dbReference>
<dbReference type="PRINTS" id="PR00412">
    <property type="entry name" value="EPOXHYDRLASE"/>
</dbReference>
<dbReference type="SUPFAM" id="SSF53474">
    <property type="entry name" value="alpha/beta-Hydrolases"/>
    <property type="match status" value="1"/>
</dbReference>
<dbReference type="PROSITE" id="PS51318">
    <property type="entry name" value="TAT"/>
    <property type="match status" value="1"/>
</dbReference>
<organism>
    <name type="scientific">Stigmatella aurantiaca (strain DW4/3-1)</name>
    <dbReference type="NCBI Taxonomy" id="378806"/>
    <lineage>
        <taxon>Bacteria</taxon>
        <taxon>Pseudomonadati</taxon>
        <taxon>Myxococcota</taxon>
        <taxon>Myxococcia</taxon>
        <taxon>Myxococcales</taxon>
        <taxon>Cystobacterineae</taxon>
        <taxon>Archangiaceae</taxon>
        <taxon>Stigmatella</taxon>
    </lineage>
</organism>
<name>HYEP_STIAD</name>
<proteinExistence type="inferred from homology"/>
<comment type="catalytic activity">
    <reaction>
        <text>an epoxide + H2O = an ethanediol</text>
        <dbReference type="Rhea" id="RHEA:19037"/>
        <dbReference type="ChEBI" id="CHEBI:15377"/>
        <dbReference type="ChEBI" id="CHEBI:32955"/>
        <dbReference type="ChEBI" id="CHEBI:140594"/>
        <dbReference type="EC" id="3.3.2.10"/>
    </reaction>
</comment>
<comment type="PTM">
    <text>Predicted to be exported by the Tat system. The position of the signal peptide cleavage has not been experimentally proven.</text>
</comment>
<comment type="similarity">
    <text evidence="3">Belongs to the peptidase S33 family.</text>
</comment>
<comment type="sequence caution" evidence="3">
    <conflict type="miscellaneous discrepancy">
        <sequence resource="EMBL-CDS" id="AAA16137"/>
    </conflict>
    <text>Chimera. Seems to include DNA from another gene.</text>
</comment>
<evidence type="ECO:0000255" key="1">
    <source>
        <dbReference type="PROSITE-ProRule" id="PRU00648"/>
    </source>
</evidence>
<evidence type="ECO:0000256" key="2">
    <source>
        <dbReference type="SAM" id="MobiDB-lite"/>
    </source>
</evidence>
<evidence type="ECO:0000305" key="3"/>
<sequence length="440" mass="48153">MTKTLAEQPGEGAAPVSPSPSRRALLHGAAGLGALAAGAAVAGPGLAFAAPAGLPLPPATPGITPFKIAVPQSALTDLKRRLGATRWPERETVEDWSQGVPLAKLQGLVEYWRTRYDWRRAEATLNRFPNYRTQLDGLGIHFLHARSKHENALPILLTHGWPGSVIEFLKLIPLLTDPTAHGGKAEDAFHVILPSLPGFGFSDKPTQKGWNMARIAKAWAELMQRLGYTHWVAQGGDWGAGVTTALAHLQPAGLAGIHLNFPLVFPEKLPTTDLSPEEQRALAQAQAFNTHGSGYFLLQTTRPQTVGYALADSPSGQAAWIYEKFQGWTDNKGDPESALSQDEMLDNISLYWLTDTAASSARIYWENAGSNFSGGKLDLPVGVSVFPRELFRAPKRWAEQTYSKLIYWNEPDRGGHFAAFEQPALFAHELRECFRQLRAK</sequence>
<feature type="signal peptide" description="Tat-type signal" evidence="1">
    <location>
        <begin position="1"/>
        <end position="49"/>
    </location>
</feature>
<feature type="chain" id="PRO_0000084109" description="Putative epoxide hydrolase">
    <location>
        <begin position="50"/>
        <end position="440"/>
    </location>
</feature>
<feature type="region of interest" description="Disordered" evidence="2">
    <location>
        <begin position="1"/>
        <end position="21"/>
    </location>
</feature>